<sequence length="87" mass="9526">MAHKKGQGSVKNGRDSRSKRLGVKKFGGQEVIAGNIIIRQRGTKWHPGKGVGMGRDYTIFSLVDGRVFFDREGRRVNVAPEGSEAAN</sequence>
<proteinExistence type="inferred from homology"/>
<name>RL27_AKKM8</name>
<accession>B2UNV3</accession>
<organism>
    <name type="scientific">Akkermansia muciniphila (strain ATCC BAA-835 / DSM 22959 / JCM 33894 / BCRC 81048 / CCUG 64013 / CIP 107961 / Muc)</name>
    <dbReference type="NCBI Taxonomy" id="349741"/>
    <lineage>
        <taxon>Bacteria</taxon>
        <taxon>Pseudomonadati</taxon>
        <taxon>Verrucomicrobiota</taxon>
        <taxon>Verrucomicrobiia</taxon>
        <taxon>Verrucomicrobiales</taxon>
        <taxon>Akkermansiaceae</taxon>
        <taxon>Akkermansia</taxon>
    </lineage>
</organism>
<keyword id="KW-1185">Reference proteome</keyword>
<keyword id="KW-0687">Ribonucleoprotein</keyword>
<keyword id="KW-0689">Ribosomal protein</keyword>
<protein>
    <recommendedName>
        <fullName evidence="1">Large ribosomal subunit protein bL27</fullName>
    </recommendedName>
    <alternativeName>
        <fullName evidence="3">50S ribosomal protein L27</fullName>
    </alternativeName>
</protein>
<evidence type="ECO:0000255" key="1">
    <source>
        <dbReference type="HAMAP-Rule" id="MF_00539"/>
    </source>
</evidence>
<evidence type="ECO:0000256" key="2">
    <source>
        <dbReference type="SAM" id="MobiDB-lite"/>
    </source>
</evidence>
<evidence type="ECO:0000305" key="3"/>
<comment type="similarity">
    <text evidence="1">Belongs to the bacterial ribosomal protein bL27 family.</text>
</comment>
<feature type="chain" id="PRO_1000128684" description="Large ribosomal subunit protein bL27">
    <location>
        <begin position="1"/>
        <end position="87"/>
    </location>
</feature>
<feature type="region of interest" description="Disordered" evidence="2">
    <location>
        <begin position="1"/>
        <end position="22"/>
    </location>
</feature>
<gene>
    <name evidence="1" type="primary">rpmA</name>
    <name type="ordered locus">Amuc_0485</name>
</gene>
<reference key="1">
    <citation type="journal article" date="2011" name="PLoS ONE">
        <title>The genome of Akkermansia muciniphila, a dedicated intestinal mucin degrader, and its use in exploring intestinal metagenomes.</title>
        <authorList>
            <person name="van Passel M.W."/>
            <person name="Kant R."/>
            <person name="Zoetendal E.G."/>
            <person name="Plugge C.M."/>
            <person name="Derrien M."/>
            <person name="Malfatti S.A."/>
            <person name="Chain P.S."/>
            <person name="Woyke T."/>
            <person name="Palva A."/>
            <person name="de Vos W.M."/>
            <person name="Smidt H."/>
        </authorList>
    </citation>
    <scope>NUCLEOTIDE SEQUENCE [LARGE SCALE GENOMIC DNA]</scope>
    <source>
        <strain>ATCC BAA-835 / DSM 22959 / JCM 33894 / BCRC 81048 / CCUG 64013 / CIP 107961 / Muc</strain>
    </source>
</reference>
<dbReference type="EMBL" id="CP001071">
    <property type="protein sequence ID" value="ACD04323.1"/>
    <property type="molecule type" value="Genomic_DNA"/>
</dbReference>
<dbReference type="RefSeq" id="WP_012419538.1">
    <property type="nucleotide sequence ID" value="NZ_CP071807.1"/>
</dbReference>
<dbReference type="SMR" id="B2UNV3"/>
<dbReference type="STRING" id="349741.Amuc_0485"/>
<dbReference type="PaxDb" id="349741-Amuc_0485"/>
<dbReference type="GeneID" id="60879955"/>
<dbReference type="KEGG" id="amu:Amuc_0485"/>
<dbReference type="eggNOG" id="COG0211">
    <property type="taxonomic scope" value="Bacteria"/>
</dbReference>
<dbReference type="HOGENOM" id="CLU_095424_4_0_0"/>
<dbReference type="OrthoDB" id="9803474at2"/>
<dbReference type="BioCyc" id="AMUC349741:G1GBX-533-MONOMER"/>
<dbReference type="Proteomes" id="UP000001031">
    <property type="component" value="Chromosome"/>
</dbReference>
<dbReference type="GO" id="GO:0022625">
    <property type="term" value="C:cytosolic large ribosomal subunit"/>
    <property type="evidence" value="ECO:0007669"/>
    <property type="project" value="TreeGrafter"/>
</dbReference>
<dbReference type="GO" id="GO:0003735">
    <property type="term" value="F:structural constituent of ribosome"/>
    <property type="evidence" value="ECO:0007669"/>
    <property type="project" value="InterPro"/>
</dbReference>
<dbReference type="GO" id="GO:0006412">
    <property type="term" value="P:translation"/>
    <property type="evidence" value="ECO:0007669"/>
    <property type="project" value="UniProtKB-UniRule"/>
</dbReference>
<dbReference type="FunFam" id="2.40.50.100:FF:000020">
    <property type="entry name" value="50S ribosomal protein L27"/>
    <property type="match status" value="1"/>
</dbReference>
<dbReference type="Gene3D" id="2.40.50.100">
    <property type="match status" value="1"/>
</dbReference>
<dbReference type="HAMAP" id="MF_00539">
    <property type="entry name" value="Ribosomal_bL27"/>
    <property type="match status" value="1"/>
</dbReference>
<dbReference type="InterPro" id="IPR001684">
    <property type="entry name" value="Ribosomal_bL27"/>
</dbReference>
<dbReference type="InterPro" id="IPR018261">
    <property type="entry name" value="Ribosomal_bL27_CS"/>
</dbReference>
<dbReference type="NCBIfam" id="TIGR00062">
    <property type="entry name" value="L27"/>
    <property type="match status" value="1"/>
</dbReference>
<dbReference type="PANTHER" id="PTHR15893:SF0">
    <property type="entry name" value="LARGE RIBOSOMAL SUBUNIT PROTEIN BL27M"/>
    <property type="match status" value="1"/>
</dbReference>
<dbReference type="PANTHER" id="PTHR15893">
    <property type="entry name" value="RIBOSOMAL PROTEIN L27"/>
    <property type="match status" value="1"/>
</dbReference>
<dbReference type="Pfam" id="PF01016">
    <property type="entry name" value="Ribosomal_L27"/>
    <property type="match status" value="1"/>
</dbReference>
<dbReference type="PRINTS" id="PR00063">
    <property type="entry name" value="RIBOSOMALL27"/>
</dbReference>
<dbReference type="SUPFAM" id="SSF110324">
    <property type="entry name" value="Ribosomal L27 protein-like"/>
    <property type="match status" value="1"/>
</dbReference>
<dbReference type="PROSITE" id="PS00831">
    <property type="entry name" value="RIBOSOMAL_L27"/>
    <property type="match status" value="1"/>
</dbReference>